<gene>
    <name evidence="1" type="primary">rsmG</name>
    <name type="ordered locus">MAE_53620</name>
</gene>
<comment type="function">
    <text evidence="1">Specifically methylates the N7 position of a guanine in 16S rRNA.</text>
</comment>
<comment type="subcellular location">
    <subcellularLocation>
        <location evidence="1">Cytoplasm</location>
    </subcellularLocation>
</comment>
<comment type="similarity">
    <text evidence="1">Belongs to the methyltransferase superfamily. RNA methyltransferase RsmG family.</text>
</comment>
<organism>
    <name type="scientific">Microcystis aeruginosa (strain NIES-843 / IAM M-2473)</name>
    <dbReference type="NCBI Taxonomy" id="449447"/>
    <lineage>
        <taxon>Bacteria</taxon>
        <taxon>Bacillati</taxon>
        <taxon>Cyanobacteriota</taxon>
        <taxon>Cyanophyceae</taxon>
        <taxon>Oscillatoriophycideae</taxon>
        <taxon>Chroococcales</taxon>
        <taxon>Microcystaceae</taxon>
        <taxon>Microcystis</taxon>
    </lineage>
</organism>
<reference key="1">
    <citation type="journal article" date="2007" name="DNA Res.">
        <title>Complete genomic structure of the bloom-forming toxic cyanobacterium Microcystis aeruginosa NIES-843.</title>
        <authorList>
            <person name="Kaneko T."/>
            <person name="Nakajima N."/>
            <person name="Okamoto S."/>
            <person name="Suzuki I."/>
            <person name="Tanabe Y."/>
            <person name="Tamaoki M."/>
            <person name="Nakamura Y."/>
            <person name="Kasai F."/>
            <person name="Watanabe A."/>
            <person name="Kawashima K."/>
            <person name="Kishida Y."/>
            <person name="Ono A."/>
            <person name="Shimizu Y."/>
            <person name="Takahashi C."/>
            <person name="Minami C."/>
            <person name="Fujishiro T."/>
            <person name="Kohara M."/>
            <person name="Katoh M."/>
            <person name="Nakazaki N."/>
            <person name="Nakayama S."/>
            <person name="Yamada M."/>
            <person name="Tabata S."/>
            <person name="Watanabe M.M."/>
        </authorList>
    </citation>
    <scope>NUCLEOTIDE SEQUENCE [LARGE SCALE GENOMIC DNA]</scope>
    <source>
        <strain>NIES-843 / IAM M-247</strain>
    </source>
</reference>
<name>RSMG_MICAN</name>
<accession>B0JYE6</accession>
<dbReference type="EC" id="2.1.1.-" evidence="1"/>
<dbReference type="EMBL" id="AP009552">
    <property type="protein sequence ID" value="BAG05184.1"/>
    <property type="molecule type" value="Genomic_DNA"/>
</dbReference>
<dbReference type="RefSeq" id="WP_012267707.1">
    <property type="nucleotide sequence ID" value="NC_010296.1"/>
</dbReference>
<dbReference type="SMR" id="B0JYE6"/>
<dbReference type="STRING" id="449447.MAE_53620"/>
<dbReference type="PaxDb" id="449447-MAE_53620"/>
<dbReference type="EnsemblBacteria" id="BAG05184">
    <property type="protein sequence ID" value="BAG05184"/>
    <property type="gene ID" value="MAE_53620"/>
</dbReference>
<dbReference type="KEGG" id="mar:MAE_53620"/>
<dbReference type="PATRIC" id="fig|449447.4.peg.4890"/>
<dbReference type="eggNOG" id="COG0357">
    <property type="taxonomic scope" value="Bacteria"/>
</dbReference>
<dbReference type="HOGENOM" id="CLU_065341_0_2_3"/>
<dbReference type="BioCyc" id="MAER449447:MAE_RS23295-MONOMER"/>
<dbReference type="Proteomes" id="UP000001510">
    <property type="component" value="Chromosome"/>
</dbReference>
<dbReference type="GO" id="GO:0005829">
    <property type="term" value="C:cytosol"/>
    <property type="evidence" value="ECO:0007669"/>
    <property type="project" value="TreeGrafter"/>
</dbReference>
<dbReference type="GO" id="GO:0070043">
    <property type="term" value="F:rRNA (guanine-N7-)-methyltransferase activity"/>
    <property type="evidence" value="ECO:0007669"/>
    <property type="project" value="UniProtKB-UniRule"/>
</dbReference>
<dbReference type="CDD" id="cd02440">
    <property type="entry name" value="AdoMet_MTases"/>
    <property type="match status" value="1"/>
</dbReference>
<dbReference type="Gene3D" id="3.40.50.150">
    <property type="entry name" value="Vaccinia Virus protein VP39"/>
    <property type="match status" value="1"/>
</dbReference>
<dbReference type="HAMAP" id="MF_00074">
    <property type="entry name" value="16SrRNA_methyltr_G"/>
    <property type="match status" value="1"/>
</dbReference>
<dbReference type="InterPro" id="IPR003682">
    <property type="entry name" value="rRNA_ssu_MeTfrase_G"/>
</dbReference>
<dbReference type="InterPro" id="IPR029063">
    <property type="entry name" value="SAM-dependent_MTases_sf"/>
</dbReference>
<dbReference type="NCBIfam" id="TIGR00138">
    <property type="entry name" value="rsmG_gidB"/>
    <property type="match status" value="1"/>
</dbReference>
<dbReference type="PANTHER" id="PTHR31760">
    <property type="entry name" value="S-ADENOSYL-L-METHIONINE-DEPENDENT METHYLTRANSFERASES SUPERFAMILY PROTEIN"/>
    <property type="match status" value="1"/>
</dbReference>
<dbReference type="PANTHER" id="PTHR31760:SF0">
    <property type="entry name" value="S-ADENOSYL-L-METHIONINE-DEPENDENT METHYLTRANSFERASES SUPERFAMILY PROTEIN"/>
    <property type="match status" value="1"/>
</dbReference>
<dbReference type="Pfam" id="PF02527">
    <property type="entry name" value="GidB"/>
    <property type="match status" value="1"/>
</dbReference>
<dbReference type="PIRSF" id="PIRSF003078">
    <property type="entry name" value="GidB"/>
    <property type="match status" value="1"/>
</dbReference>
<dbReference type="SUPFAM" id="SSF53335">
    <property type="entry name" value="S-adenosyl-L-methionine-dependent methyltransferases"/>
    <property type="match status" value="1"/>
</dbReference>
<sequence>MILPELFDLWQETLEWQPDGAQQARFQQLYDLILEGNQRFNLTRITQPEEFWEKHLWDSLSGLAWLQKSQPDLLTKSLSVIDLGTGAGFPGVPIAIAYPHWSVTLLDSTQKKINFLEEVIDKLELNNTKTRLGRAEIVGKNLKHNCAYDIVCLRAVGNVDICVNYALPFLKKTGIAILYRGQWSAQDSLSLEENLGKAGGKILEIASFTTPLSESVRHCLYISKK</sequence>
<feature type="chain" id="PRO_0000335372" description="Ribosomal RNA small subunit methyltransferase G">
    <location>
        <begin position="1"/>
        <end position="225"/>
    </location>
</feature>
<feature type="binding site" evidence="1">
    <location>
        <position position="84"/>
    </location>
    <ligand>
        <name>S-adenosyl-L-methionine</name>
        <dbReference type="ChEBI" id="CHEBI:59789"/>
    </ligand>
</feature>
<feature type="binding site" evidence="1">
    <location>
        <position position="89"/>
    </location>
    <ligand>
        <name>S-adenosyl-L-methionine</name>
        <dbReference type="ChEBI" id="CHEBI:59789"/>
    </ligand>
</feature>
<feature type="binding site" evidence="1">
    <location>
        <begin position="107"/>
        <end position="109"/>
    </location>
    <ligand>
        <name>S-adenosyl-L-methionine</name>
        <dbReference type="ChEBI" id="CHEBI:59789"/>
    </ligand>
</feature>
<feature type="binding site" evidence="1">
    <location>
        <begin position="135"/>
        <end position="136"/>
    </location>
    <ligand>
        <name>S-adenosyl-L-methionine</name>
        <dbReference type="ChEBI" id="CHEBI:59789"/>
    </ligand>
</feature>
<feature type="binding site" evidence="1">
    <location>
        <position position="154"/>
    </location>
    <ligand>
        <name>S-adenosyl-L-methionine</name>
        <dbReference type="ChEBI" id="CHEBI:59789"/>
    </ligand>
</feature>
<evidence type="ECO:0000255" key="1">
    <source>
        <dbReference type="HAMAP-Rule" id="MF_00074"/>
    </source>
</evidence>
<proteinExistence type="inferred from homology"/>
<keyword id="KW-0963">Cytoplasm</keyword>
<keyword id="KW-0489">Methyltransferase</keyword>
<keyword id="KW-0698">rRNA processing</keyword>
<keyword id="KW-0949">S-adenosyl-L-methionine</keyword>
<keyword id="KW-0808">Transferase</keyword>
<protein>
    <recommendedName>
        <fullName evidence="1">Ribosomal RNA small subunit methyltransferase G</fullName>
        <ecNumber evidence="1">2.1.1.-</ecNumber>
    </recommendedName>
    <alternativeName>
        <fullName evidence="1">16S rRNA 7-methylguanosine methyltransferase</fullName>
        <shortName evidence="1">16S rRNA m7G methyltransferase</shortName>
    </alternativeName>
</protein>